<keyword id="KW-0687">Ribonucleoprotein</keyword>
<keyword id="KW-0689">Ribosomal protein</keyword>
<organism>
    <name type="scientific">Vibrio vulnificus (strain CMCP6)</name>
    <dbReference type="NCBI Taxonomy" id="216895"/>
    <lineage>
        <taxon>Bacteria</taxon>
        <taxon>Pseudomonadati</taxon>
        <taxon>Pseudomonadota</taxon>
        <taxon>Gammaproteobacteria</taxon>
        <taxon>Vibrionales</taxon>
        <taxon>Vibrionaceae</taxon>
        <taxon>Vibrio</taxon>
    </lineage>
</organism>
<gene>
    <name evidence="1" type="primary">rpsP</name>
    <name type="ordered locus">VV1_1615</name>
</gene>
<comment type="similarity">
    <text evidence="1">Belongs to the bacterial ribosomal protein bS16 family.</text>
</comment>
<proteinExistence type="inferred from homology"/>
<dbReference type="EMBL" id="AE016795">
    <property type="protein sequence ID" value="AAO10034.1"/>
    <property type="molecule type" value="Genomic_DNA"/>
</dbReference>
<dbReference type="RefSeq" id="WP_011079541.1">
    <property type="nucleotide sequence ID" value="NC_004459.3"/>
</dbReference>
<dbReference type="SMR" id="Q8DC33"/>
<dbReference type="GeneID" id="95678062"/>
<dbReference type="KEGG" id="vvu:VV1_1615"/>
<dbReference type="HOGENOM" id="CLU_100590_5_1_6"/>
<dbReference type="Proteomes" id="UP000002275">
    <property type="component" value="Chromosome 1"/>
</dbReference>
<dbReference type="GO" id="GO:0005737">
    <property type="term" value="C:cytoplasm"/>
    <property type="evidence" value="ECO:0007669"/>
    <property type="project" value="UniProtKB-ARBA"/>
</dbReference>
<dbReference type="GO" id="GO:0015935">
    <property type="term" value="C:small ribosomal subunit"/>
    <property type="evidence" value="ECO:0007669"/>
    <property type="project" value="TreeGrafter"/>
</dbReference>
<dbReference type="GO" id="GO:0003735">
    <property type="term" value="F:structural constituent of ribosome"/>
    <property type="evidence" value="ECO:0007669"/>
    <property type="project" value="InterPro"/>
</dbReference>
<dbReference type="GO" id="GO:0006412">
    <property type="term" value="P:translation"/>
    <property type="evidence" value="ECO:0007669"/>
    <property type="project" value="UniProtKB-UniRule"/>
</dbReference>
<dbReference type="FunFam" id="3.30.1320.10:FF:000001">
    <property type="entry name" value="30S ribosomal protein S16"/>
    <property type="match status" value="1"/>
</dbReference>
<dbReference type="Gene3D" id="3.30.1320.10">
    <property type="match status" value="1"/>
</dbReference>
<dbReference type="HAMAP" id="MF_00385">
    <property type="entry name" value="Ribosomal_bS16"/>
    <property type="match status" value="1"/>
</dbReference>
<dbReference type="InterPro" id="IPR000307">
    <property type="entry name" value="Ribosomal_bS16"/>
</dbReference>
<dbReference type="InterPro" id="IPR020592">
    <property type="entry name" value="Ribosomal_bS16_CS"/>
</dbReference>
<dbReference type="InterPro" id="IPR023803">
    <property type="entry name" value="Ribosomal_bS16_dom_sf"/>
</dbReference>
<dbReference type="NCBIfam" id="TIGR00002">
    <property type="entry name" value="S16"/>
    <property type="match status" value="1"/>
</dbReference>
<dbReference type="PANTHER" id="PTHR12919">
    <property type="entry name" value="30S RIBOSOMAL PROTEIN S16"/>
    <property type="match status" value="1"/>
</dbReference>
<dbReference type="PANTHER" id="PTHR12919:SF20">
    <property type="entry name" value="SMALL RIBOSOMAL SUBUNIT PROTEIN BS16M"/>
    <property type="match status" value="1"/>
</dbReference>
<dbReference type="Pfam" id="PF00886">
    <property type="entry name" value="Ribosomal_S16"/>
    <property type="match status" value="1"/>
</dbReference>
<dbReference type="SUPFAM" id="SSF54565">
    <property type="entry name" value="Ribosomal protein S16"/>
    <property type="match status" value="1"/>
</dbReference>
<dbReference type="PROSITE" id="PS00732">
    <property type="entry name" value="RIBOSOMAL_S16"/>
    <property type="match status" value="1"/>
</dbReference>
<accession>Q8DC33</accession>
<name>RS16_VIBVU</name>
<feature type="chain" id="PRO_0000167280" description="Small ribosomal subunit protein bS16">
    <location>
        <begin position="1"/>
        <end position="82"/>
    </location>
</feature>
<sequence length="82" mass="9105">MVTIRLARHGAKKRPFYQIVVADSRNVATGRFIEKVGFFNPTAQGQEEGLRIDLDRVNHWVGQGASLSDRVAKLVKDAQKAA</sequence>
<evidence type="ECO:0000255" key="1">
    <source>
        <dbReference type="HAMAP-Rule" id="MF_00385"/>
    </source>
</evidence>
<evidence type="ECO:0000305" key="2"/>
<protein>
    <recommendedName>
        <fullName evidence="1">Small ribosomal subunit protein bS16</fullName>
    </recommendedName>
    <alternativeName>
        <fullName evidence="2">30S ribosomal protein S16</fullName>
    </alternativeName>
</protein>
<reference key="1">
    <citation type="submission" date="2002-12" db="EMBL/GenBank/DDBJ databases">
        <title>Complete genome sequence of Vibrio vulnificus CMCP6.</title>
        <authorList>
            <person name="Rhee J.H."/>
            <person name="Kim S.Y."/>
            <person name="Chung S.S."/>
            <person name="Kim J.J."/>
            <person name="Moon Y.H."/>
            <person name="Jeong H."/>
            <person name="Choy H.E."/>
        </authorList>
    </citation>
    <scope>NUCLEOTIDE SEQUENCE [LARGE SCALE GENOMIC DNA]</scope>
    <source>
        <strain>CMCP6</strain>
    </source>
</reference>